<comment type="function">
    <text evidence="1">Catalyzes the reversible transfer of the terminal phosphate group between ATP and AMP. Plays an important role in cellular energy homeostasis and in adenine nucleotide metabolism.</text>
</comment>
<comment type="catalytic activity">
    <reaction evidence="1">
        <text>AMP + ATP = 2 ADP</text>
        <dbReference type="Rhea" id="RHEA:12973"/>
        <dbReference type="ChEBI" id="CHEBI:30616"/>
        <dbReference type="ChEBI" id="CHEBI:456215"/>
        <dbReference type="ChEBI" id="CHEBI:456216"/>
        <dbReference type="EC" id="2.7.4.3"/>
    </reaction>
</comment>
<comment type="pathway">
    <text evidence="1">Purine metabolism; AMP biosynthesis via salvage pathway; AMP from ADP: step 1/1.</text>
</comment>
<comment type="subunit">
    <text evidence="1">Monomer.</text>
</comment>
<comment type="interaction">
    <interactant intactId="EBI-2206969">
        <id>Q97SU1</id>
    </interactant>
    <interactant intactId="EBI-2207023">
        <id>Q97SE7</id>
        <label>gatB</label>
    </interactant>
    <organismsDiffer>false</organismsDiffer>
    <experiments>2</experiments>
</comment>
<comment type="interaction">
    <interactant intactId="EBI-2206969">
        <id>Q97SU1</id>
    </interactant>
    <interactant intactId="EBI-2207053">
        <id>Q97SE5</id>
        <label>gatC</label>
    </interactant>
    <organismsDiffer>false</organismsDiffer>
    <experiments>2</experiments>
</comment>
<comment type="interaction">
    <interactant intactId="EBI-2206969">
        <id>Q97SU1</id>
    </interactant>
    <interactant intactId="EBI-2206949">
        <id>Q97NV3</id>
        <label>groES</label>
    </interactant>
    <organismsDiffer>false</organismsDiffer>
    <experiments>2</experiments>
</comment>
<comment type="interaction">
    <interactant intactId="EBI-2206969">
        <id>Q97SU1</id>
    </interactant>
    <interactant intactId="EBI-2206697">
        <id>Q97NX6</id>
        <label>scpB</label>
    </interactant>
    <organismsDiffer>false</organismsDiffer>
    <experiments>2</experiments>
</comment>
<comment type="subcellular location">
    <subcellularLocation>
        <location evidence="1">Cytoplasm</location>
    </subcellularLocation>
</comment>
<comment type="domain">
    <text evidence="1">Consists of three domains, a large central CORE domain and two small peripheral domains, NMPbind and LID, which undergo movements during catalysis. The LID domain closes over the site of phosphoryl transfer upon ATP binding. Assembling and dissambling the active center during each catalytic cycle provides an effective means to prevent ATP hydrolysis.</text>
</comment>
<comment type="similarity">
    <text evidence="1">Belongs to the adenylate kinase family.</text>
</comment>
<evidence type="ECO:0000255" key="1">
    <source>
        <dbReference type="HAMAP-Rule" id="MF_00235"/>
    </source>
</evidence>
<organism>
    <name type="scientific">Streptococcus pneumoniae serotype 4 (strain ATCC BAA-334 / TIGR4)</name>
    <dbReference type="NCBI Taxonomy" id="170187"/>
    <lineage>
        <taxon>Bacteria</taxon>
        <taxon>Bacillati</taxon>
        <taxon>Bacillota</taxon>
        <taxon>Bacilli</taxon>
        <taxon>Lactobacillales</taxon>
        <taxon>Streptococcaceae</taxon>
        <taxon>Streptococcus</taxon>
    </lineage>
</organism>
<accession>Q97SU1</accession>
<name>KAD_STRPN</name>
<feature type="chain" id="PRO_0000158860" description="Adenylate kinase">
    <location>
        <begin position="1"/>
        <end position="212"/>
    </location>
</feature>
<feature type="region of interest" description="NMP" evidence="1">
    <location>
        <begin position="30"/>
        <end position="59"/>
    </location>
</feature>
<feature type="region of interest" description="LID" evidence="1">
    <location>
        <begin position="127"/>
        <end position="159"/>
    </location>
</feature>
<feature type="binding site" evidence="1">
    <location>
        <begin position="10"/>
        <end position="15"/>
    </location>
    <ligand>
        <name>ATP</name>
        <dbReference type="ChEBI" id="CHEBI:30616"/>
    </ligand>
</feature>
<feature type="binding site" evidence="1">
    <location>
        <position position="31"/>
    </location>
    <ligand>
        <name>AMP</name>
        <dbReference type="ChEBI" id="CHEBI:456215"/>
    </ligand>
</feature>
<feature type="binding site" evidence="1">
    <location>
        <position position="36"/>
    </location>
    <ligand>
        <name>AMP</name>
        <dbReference type="ChEBI" id="CHEBI:456215"/>
    </ligand>
</feature>
<feature type="binding site" evidence="1">
    <location>
        <begin position="57"/>
        <end position="59"/>
    </location>
    <ligand>
        <name>AMP</name>
        <dbReference type="ChEBI" id="CHEBI:456215"/>
    </ligand>
</feature>
<feature type="binding site" evidence="1">
    <location>
        <begin position="86"/>
        <end position="89"/>
    </location>
    <ligand>
        <name>AMP</name>
        <dbReference type="ChEBI" id="CHEBI:456215"/>
    </ligand>
</feature>
<feature type="binding site" evidence="1">
    <location>
        <position position="93"/>
    </location>
    <ligand>
        <name>AMP</name>
        <dbReference type="ChEBI" id="CHEBI:456215"/>
    </ligand>
</feature>
<feature type="binding site" evidence="1">
    <location>
        <position position="128"/>
    </location>
    <ligand>
        <name>ATP</name>
        <dbReference type="ChEBI" id="CHEBI:30616"/>
    </ligand>
</feature>
<feature type="binding site" evidence="1">
    <location>
        <begin position="137"/>
        <end position="138"/>
    </location>
    <ligand>
        <name>ATP</name>
        <dbReference type="ChEBI" id="CHEBI:30616"/>
    </ligand>
</feature>
<feature type="binding site" evidence="1">
    <location>
        <position position="156"/>
    </location>
    <ligand>
        <name>AMP</name>
        <dbReference type="ChEBI" id="CHEBI:456215"/>
    </ligand>
</feature>
<feature type="binding site" evidence="1">
    <location>
        <position position="167"/>
    </location>
    <ligand>
        <name>AMP</name>
        <dbReference type="ChEBI" id="CHEBI:456215"/>
    </ligand>
</feature>
<feature type="binding site" evidence="1">
    <location>
        <position position="195"/>
    </location>
    <ligand>
        <name>ATP</name>
        <dbReference type="ChEBI" id="CHEBI:30616"/>
    </ligand>
</feature>
<proteinExistence type="evidence at protein level"/>
<reference key="1">
    <citation type="journal article" date="2001" name="Science">
        <title>Complete genome sequence of a virulent isolate of Streptococcus pneumoniae.</title>
        <authorList>
            <person name="Tettelin H."/>
            <person name="Nelson K.E."/>
            <person name="Paulsen I.T."/>
            <person name="Eisen J.A."/>
            <person name="Read T.D."/>
            <person name="Peterson S.N."/>
            <person name="Heidelberg J.F."/>
            <person name="DeBoy R.T."/>
            <person name="Haft D.H."/>
            <person name="Dodson R.J."/>
            <person name="Durkin A.S."/>
            <person name="Gwinn M.L."/>
            <person name="Kolonay J.F."/>
            <person name="Nelson W.C."/>
            <person name="Peterson J.D."/>
            <person name="Umayam L.A."/>
            <person name="White O."/>
            <person name="Salzberg S.L."/>
            <person name="Lewis M.R."/>
            <person name="Radune D."/>
            <person name="Holtzapple E.K."/>
            <person name="Khouri H.M."/>
            <person name="Wolf A.M."/>
            <person name="Utterback T.R."/>
            <person name="Hansen C.L."/>
            <person name="McDonald L.A."/>
            <person name="Feldblyum T.V."/>
            <person name="Angiuoli S.V."/>
            <person name="Dickinson T."/>
            <person name="Hickey E.K."/>
            <person name="Holt I.E."/>
            <person name="Loftus B.J."/>
            <person name="Yang F."/>
            <person name="Smith H.O."/>
            <person name="Venter J.C."/>
            <person name="Dougherty B.A."/>
            <person name="Morrison D.A."/>
            <person name="Hollingshead S.K."/>
            <person name="Fraser C.M."/>
        </authorList>
    </citation>
    <scope>NUCLEOTIDE SEQUENCE [LARGE SCALE GENOMIC DNA]</scope>
    <source>
        <strain>ATCC BAA-334 / TIGR4</strain>
    </source>
</reference>
<dbReference type="EC" id="2.7.4.3" evidence="1"/>
<dbReference type="EMBL" id="AE005672">
    <property type="protein sequence ID" value="AAK74411.1"/>
    <property type="molecule type" value="Genomic_DNA"/>
</dbReference>
<dbReference type="PIR" id="B95027">
    <property type="entry name" value="B95027"/>
</dbReference>
<dbReference type="RefSeq" id="WP_001050436.1">
    <property type="nucleotide sequence ID" value="NZ_CP155539.1"/>
</dbReference>
<dbReference type="SMR" id="Q97SU1"/>
<dbReference type="IntAct" id="Q97SU1">
    <property type="interactions" value="4"/>
</dbReference>
<dbReference type="PaxDb" id="170187-SP_0231"/>
<dbReference type="EnsemblBacteria" id="AAK74411">
    <property type="protein sequence ID" value="AAK74411"/>
    <property type="gene ID" value="SP_0231"/>
</dbReference>
<dbReference type="KEGG" id="spn:SP_0231"/>
<dbReference type="eggNOG" id="COG0563">
    <property type="taxonomic scope" value="Bacteria"/>
</dbReference>
<dbReference type="PhylomeDB" id="Q97SU1"/>
<dbReference type="BioCyc" id="SPNE170187:G1FZB-235-MONOMER"/>
<dbReference type="UniPathway" id="UPA00588">
    <property type="reaction ID" value="UER00649"/>
</dbReference>
<dbReference type="Proteomes" id="UP000000585">
    <property type="component" value="Chromosome"/>
</dbReference>
<dbReference type="GO" id="GO:0005737">
    <property type="term" value="C:cytoplasm"/>
    <property type="evidence" value="ECO:0007669"/>
    <property type="project" value="UniProtKB-SubCell"/>
</dbReference>
<dbReference type="GO" id="GO:0004017">
    <property type="term" value="F:adenylate kinase activity"/>
    <property type="evidence" value="ECO:0007669"/>
    <property type="project" value="UniProtKB-UniRule"/>
</dbReference>
<dbReference type="GO" id="GO:0005524">
    <property type="term" value="F:ATP binding"/>
    <property type="evidence" value="ECO:0007669"/>
    <property type="project" value="UniProtKB-UniRule"/>
</dbReference>
<dbReference type="GO" id="GO:0044209">
    <property type="term" value="P:AMP salvage"/>
    <property type="evidence" value="ECO:0007669"/>
    <property type="project" value="UniProtKB-UniRule"/>
</dbReference>
<dbReference type="CDD" id="cd01428">
    <property type="entry name" value="ADK"/>
    <property type="match status" value="1"/>
</dbReference>
<dbReference type="FunFam" id="3.40.50.300:FF:000106">
    <property type="entry name" value="Adenylate kinase mitochondrial"/>
    <property type="match status" value="1"/>
</dbReference>
<dbReference type="Gene3D" id="3.40.50.300">
    <property type="entry name" value="P-loop containing nucleotide triphosphate hydrolases"/>
    <property type="match status" value="1"/>
</dbReference>
<dbReference type="HAMAP" id="MF_00235">
    <property type="entry name" value="Adenylate_kinase_Adk"/>
    <property type="match status" value="1"/>
</dbReference>
<dbReference type="InterPro" id="IPR006259">
    <property type="entry name" value="Adenyl_kin_sub"/>
</dbReference>
<dbReference type="InterPro" id="IPR000850">
    <property type="entry name" value="Adenylat/UMP-CMP_kin"/>
</dbReference>
<dbReference type="InterPro" id="IPR033690">
    <property type="entry name" value="Adenylat_kinase_CS"/>
</dbReference>
<dbReference type="InterPro" id="IPR027417">
    <property type="entry name" value="P-loop_NTPase"/>
</dbReference>
<dbReference type="NCBIfam" id="TIGR01351">
    <property type="entry name" value="adk"/>
    <property type="match status" value="1"/>
</dbReference>
<dbReference type="NCBIfam" id="NF001380">
    <property type="entry name" value="PRK00279.1-2"/>
    <property type="match status" value="1"/>
</dbReference>
<dbReference type="NCBIfam" id="NF001381">
    <property type="entry name" value="PRK00279.1-3"/>
    <property type="match status" value="1"/>
</dbReference>
<dbReference type="NCBIfam" id="NF001382">
    <property type="entry name" value="PRK00279.1-4"/>
    <property type="match status" value="1"/>
</dbReference>
<dbReference type="NCBIfam" id="NF011100">
    <property type="entry name" value="PRK14527.1"/>
    <property type="match status" value="1"/>
</dbReference>
<dbReference type="PANTHER" id="PTHR23359">
    <property type="entry name" value="NUCLEOTIDE KINASE"/>
    <property type="match status" value="1"/>
</dbReference>
<dbReference type="Pfam" id="PF00406">
    <property type="entry name" value="ADK"/>
    <property type="match status" value="1"/>
</dbReference>
<dbReference type="PRINTS" id="PR00094">
    <property type="entry name" value="ADENYLTKNASE"/>
</dbReference>
<dbReference type="SUPFAM" id="SSF52540">
    <property type="entry name" value="P-loop containing nucleoside triphosphate hydrolases"/>
    <property type="match status" value="1"/>
</dbReference>
<dbReference type="PROSITE" id="PS00113">
    <property type="entry name" value="ADENYLATE_KINASE"/>
    <property type="match status" value="1"/>
</dbReference>
<gene>
    <name evidence="1" type="primary">adk</name>
    <name type="ordered locus">SP_0231</name>
</gene>
<protein>
    <recommendedName>
        <fullName evidence="1">Adenylate kinase</fullName>
        <shortName evidence="1">AK</shortName>
        <ecNumber evidence="1">2.7.4.3</ecNumber>
    </recommendedName>
    <alternativeName>
        <fullName evidence="1">ATP-AMP transphosphorylase</fullName>
    </alternativeName>
    <alternativeName>
        <fullName evidence="1">ATP:AMP phosphotransferase</fullName>
    </alternativeName>
    <alternativeName>
        <fullName evidence="1">Adenylate monophosphate kinase</fullName>
    </alternativeName>
</protein>
<sequence>MNLLIMGLPGAGKGTQAAKIVEQFHVAHISTGDMFRAAMANQTEMGVLAKSYIDKGELVPDEVTNGIVKERLSQDDIKETGFLLDGYPRTIEQAHALDKTLAELGIELEGVINIEVNPDSLLERLSGRIIHRVTGETFHKVFNPPVDYKEEDYYQREDDKPETVKRRLDVNIAQGEPIIAHYRAKGLVHDIEGNQDINDVFSDIEKVLTNLK</sequence>
<keyword id="KW-0067">ATP-binding</keyword>
<keyword id="KW-0963">Cytoplasm</keyword>
<keyword id="KW-0418">Kinase</keyword>
<keyword id="KW-0545">Nucleotide biosynthesis</keyword>
<keyword id="KW-0547">Nucleotide-binding</keyword>
<keyword id="KW-1185">Reference proteome</keyword>
<keyword id="KW-0808">Transferase</keyword>